<keyword id="KW-0963">Cytoplasm</keyword>
<keyword id="KW-0251">Elongation factor</keyword>
<keyword id="KW-0342">GTP-binding</keyword>
<keyword id="KW-0378">Hydrolase</keyword>
<keyword id="KW-0460">Magnesium</keyword>
<keyword id="KW-0479">Metal-binding</keyword>
<keyword id="KW-0547">Nucleotide-binding</keyword>
<keyword id="KW-0648">Protein biosynthesis</keyword>
<keyword id="KW-1185">Reference proteome</keyword>
<sequence>MAKAKFERTKPHCNIGTIGHVDHGKTSLTAAITKTLAKTGGATFKAYDQIDAAPEERARGITISTAHVEYETAKRHYAHVDCPGHADYVKNMITGAAQMDGAILVVSAADGPMPQTREHILLARQVGVPALVVFLNKVDQVDDPELLELVEMEVRELLSAYQFPGDDIPIIKGSALVTLEDGDPEVGENRVRDLMDAVDAYIPQPERPVDRPFLMPIEDVFSISGRGTVVTGRVERGVVNVGDEIEIVGLRATQKTTVTGVEMFRKLLDRGEAGDNIGALVRGTKREDVERGQVLAKPGSITPHTKFKAEAYILTKEEGGRHTPFFTNYRPQFYFRTTDVTGVVHLPEGTEMVMPGDNIAMDVELIAPIAMDEGLRFAIREGGRTVGAGVVASITA</sequence>
<accession>A9H3R7</accession>
<accession>B5ZIG1</accession>
<comment type="function">
    <text evidence="2">GTP hydrolase that promotes the GTP-dependent binding of aminoacyl-tRNA to the A-site of ribosomes during protein biosynthesis.</text>
</comment>
<comment type="catalytic activity">
    <reaction evidence="2">
        <text>GTP + H2O = GDP + phosphate + H(+)</text>
        <dbReference type="Rhea" id="RHEA:19669"/>
        <dbReference type="ChEBI" id="CHEBI:15377"/>
        <dbReference type="ChEBI" id="CHEBI:15378"/>
        <dbReference type="ChEBI" id="CHEBI:37565"/>
        <dbReference type="ChEBI" id="CHEBI:43474"/>
        <dbReference type="ChEBI" id="CHEBI:58189"/>
        <dbReference type="EC" id="3.6.5.3"/>
    </reaction>
    <physiologicalReaction direction="left-to-right" evidence="2">
        <dbReference type="Rhea" id="RHEA:19670"/>
    </physiologicalReaction>
</comment>
<comment type="subunit">
    <text evidence="2">Monomer.</text>
</comment>
<comment type="subcellular location">
    <subcellularLocation>
        <location evidence="2">Cytoplasm</location>
    </subcellularLocation>
</comment>
<comment type="similarity">
    <text evidence="2">Belongs to the TRAFAC class translation factor GTPase superfamily. Classic translation factor GTPase family. EF-Tu/EF-1A subfamily.</text>
</comment>
<protein>
    <recommendedName>
        <fullName evidence="2">Elongation factor Tu</fullName>
        <shortName evidence="2">EF-Tu</shortName>
        <ecNumber evidence="2">3.6.5.3</ecNumber>
    </recommendedName>
</protein>
<proteinExistence type="inferred from homology"/>
<evidence type="ECO:0000250" key="1"/>
<evidence type="ECO:0000255" key="2">
    <source>
        <dbReference type="HAMAP-Rule" id="MF_00118"/>
    </source>
</evidence>
<dbReference type="EC" id="3.6.5.3" evidence="2"/>
<dbReference type="EMBL" id="AM889285">
    <property type="protein sequence ID" value="CAP57349.1"/>
    <property type="molecule type" value="Genomic_DNA"/>
</dbReference>
<dbReference type="EMBL" id="CP001189">
    <property type="protein sequence ID" value="ACI52694.1"/>
    <property type="molecule type" value="Genomic_DNA"/>
</dbReference>
<dbReference type="RefSeq" id="WP_012227963.1">
    <property type="nucleotide sequence ID" value="NC_010125.1"/>
</dbReference>
<dbReference type="SMR" id="A9H3R7"/>
<dbReference type="STRING" id="272568.GDI3406"/>
<dbReference type="KEGG" id="gdi:GDI3406"/>
<dbReference type="KEGG" id="gdj:Gdia_2964"/>
<dbReference type="eggNOG" id="COG0050">
    <property type="taxonomic scope" value="Bacteria"/>
</dbReference>
<dbReference type="HOGENOM" id="CLU_007265_0_1_5"/>
<dbReference type="OrthoDB" id="9803139at2"/>
<dbReference type="Proteomes" id="UP000001176">
    <property type="component" value="Chromosome"/>
</dbReference>
<dbReference type="GO" id="GO:0005829">
    <property type="term" value="C:cytosol"/>
    <property type="evidence" value="ECO:0007669"/>
    <property type="project" value="TreeGrafter"/>
</dbReference>
<dbReference type="GO" id="GO:0005525">
    <property type="term" value="F:GTP binding"/>
    <property type="evidence" value="ECO:0007669"/>
    <property type="project" value="UniProtKB-UniRule"/>
</dbReference>
<dbReference type="GO" id="GO:0003924">
    <property type="term" value="F:GTPase activity"/>
    <property type="evidence" value="ECO:0007669"/>
    <property type="project" value="InterPro"/>
</dbReference>
<dbReference type="GO" id="GO:0097216">
    <property type="term" value="F:guanosine tetraphosphate binding"/>
    <property type="evidence" value="ECO:0007669"/>
    <property type="project" value="UniProtKB-ARBA"/>
</dbReference>
<dbReference type="GO" id="GO:0003746">
    <property type="term" value="F:translation elongation factor activity"/>
    <property type="evidence" value="ECO:0007669"/>
    <property type="project" value="UniProtKB-UniRule"/>
</dbReference>
<dbReference type="CDD" id="cd01884">
    <property type="entry name" value="EF_Tu"/>
    <property type="match status" value="1"/>
</dbReference>
<dbReference type="CDD" id="cd03697">
    <property type="entry name" value="EFTU_II"/>
    <property type="match status" value="1"/>
</dbReference>
<dbReference type="CDD" id="cd03707">
    <property type="entry name" value="EFTU_III"/>
    <property type="match status" value="1"/>
</dbReference>
<dbReference type="FunFam" id="2.40.30.10:FF:000001">
    <property type="entry name" value="Elongation factor Tu"/>
    <property type="match status" value="1"/>
</dbReference>
<dbReference type="FunFam" id="3.40.50.300:FF:000003">
    <property type="entry name" value="Elongation factor Tu"/>
    <property type="match status" value="1"/>
</dbReference>
<dbReference type="Gene3D" id="3.40.50.300">
    <property type="entry name" value="P-loop containing nucleotide triphosphate hydrolases"/>
    <property type="match status" value="1"/>
</dbReference>
<dbReference type="Gene3D" id="2.40.30.10">
    <property type="entry name" value="Translation factors"/>
    <property type="match status" value="2"/>
</dbReference>
<dbReference type="HAMAP" id="MF_00118_B">
    <property type="entry name" value="EF_Tu_B"/>
    <property type="match status" value="1"/>
</dbReference>
<dbReference type="InterPro" id="IPR041709">
    <property type="entry name" value="EF-Tu_GTP-bd"/>
</dbReference>
<dbReference type="InterPro" id="IPR050055">
    <property type="entry name" value="EF-Tu_GTPase"/>
</dbReference>
<dbReference type="InterPro" id="IPR004161">
    <property type="entry name" value="EFTu-like_2"/>
</dbReference>
<dbReference type="InterPro" id="IPR033720">
    <property type="entry name" value="EFTU_2"/>
</dbReference>
<dbReference type="InterPro" id="IPR031157">
    <property type="entry name" value="G_TR_CS"/>
</dbReference>
<dbReference type="InterPro" id="IPR027417">
    <property type="entry name" value="P-loop_NTPase"/>
</dbReference>
<dbReference type="InterPro" id="IPR005225">
    <property type="entry name" value="Small_GTP-bd"/>
</dbReference>
<dbReference type="InterPro" id="IPR000795">
    <property type="entry name" value="T_Tr_GTP-bd_dom"/>
</dbReference>
<dbReference type="InterPro" id="IPR009000">
    <property type="entry name" value="Transl_B-barrel_sf"/>
</dbReference>
<dbReference type="InterPro" id="IPR009001">
    <property type="entry name" value="Transl_elong_EF1A/Init_IF2_C"/>
</dbReference>
<dbReference type="InterPro" id="IPR004541">
    <property type="entry name" value="Transl_elong_EFTu/EF1A_bac/org"/>
</dbReference>
<dbReference type="InterPro" id="IPR004160">
    <property type="entry name" value="Transl_elong_EFTu/EF1A_C"/>
</dbReference>
<dbReference type="NCBIfam" id="TIGR00485">
    <property type="entry name" value="EF-Tu"/>
    <property type="match status" value="1"/>
</dbReference>
<dbReference type="NCBIfam" id="NF000766">
    <property type="entry name" value="PRK00049.1"/>
    <property type="match status" value="1"/>
</dbReference>
<dbReference type="NCBIfam" id="NF009372">
    <property type="entry name" value="PRK12735.1"/>
    <property type="match status" value="1"/>
</dbReference>
<dbReference type="NCBIfam" id="NF009373">
    <property type="entry name" value="PRK12736.1"/>
    <property type="match status" value="1"/>
</dbReference>
<dbReference type="NCBIfam" id="TIGR00231">
    <property type="entry name" value="small_GTP"/>
    <property type="match status" value="1"/>
</dbReference>
<dbReference type="PANTHER" id="PTHR43721:SF22">
    <property type="entry name" value="ELONGATION FACTOR TU, MITOCHONDRIAL"/>
    <property type="match status" value="1"/>
</dbReference>
<dbReference type="PANTHER" id="PTHR43721">
    <property type="entry name" value="ELONGATION FACTOR TU-RELATED"/>
    <property type="match status" value="1"/>
</dbReference>
<dbReference type="Pfam" id="PF00009">
    <property type="entry name" value="GTP_EFTU"/>
    <property type="match status" value="1"/>
</dbReference>
<dbReference type="Pfam" id="PF03144">
    <property type="entry name" value="GTP_EFTU_D2"/>
    <property type="match status" value="1"/>
</dbReference>
<dbReference type="Pfam" id="PF03143">
    <property type="entry name" value="GTP_EFTU_D3"/>
    <property type="match status" value="1"/>
</dbReference>
<dbReference type="PRINTS" id="PR00315">
    <property type="entry name" value="ELONGATNFCT"/>
</dbReference>
<dbReference type="SUPFAM" id="SSF50465">
    <property type="entry name" value="EF-Tu/eEF-1alpha/eIF2-gamma C-terminal domain"/>
    <property type="match status" value="1"/>
</dbReference>
<dbReference type="SUPFAM" id="SSF52540">
    <property type="entry name" value="P-loop containing nucleoside triphosphate hydrolases"/>
    <property type="match status" value="1"/>
</dbReference>
<dbReference type="SUPFAM" id="SSF50447">
    <property type="entry name" value="Translation proteins"/>
    <property type="match status" value="1"/>
</dbReference>
<dbReference type="PROSITE" id="PS00301">
    <property type="entry name" value="G_TR_1"/>
    <property type="match status" value="1"/>
</dbReference>
<dbReference type="PROSITE" id="PS51722">
    <property type="entry name" value="G_TR_2"/>
    <property type="match status" value="1"/>
</dbReference>
<reference key="1">
    <citation type="journal article" date="2009" name="BMC Genomics">
        <title>Complete genome sequence of the sugarcane nitrogen-fixing endophyte Gluconacetobacter diazotrophicus Pal5.</title>
        <authorList>
            <person name="Bertalan M."/>
            <person name="Albano R."/>
            <person name="de Padua V."/>
            <person name="Rouws L."/>
            <person name="Rojas C."/>
            <person name="Hemerly A."/>
            <person name="Teixeira K."/>
            <person name="Schwab S."/>
            <person name="Araujo J."/>
            <person name="Oliveira A."/>
            <person name="Franca L."/>
            <person name="Magalhaes V."/>
            <person name="Alqueres S."/>
            <person name="Cardoso A."/>
            <person name="Almeida W."/>
            <person name="Loureiro M.M."/>
            <person name="Nogueira E."/>
            <person name="Cidade D."/>
            <person name="Oliveira D."/>
            <person name="Simao T."/>
            <person name="Macedo J."/>
            <person name="Valadao A."/>
            <person name="Dreschsel M."/>
            <person name="Freitas F."/>
            <person name="Vidal M."/>
            <person name="Guedes H."/>
            <person name="Rodrigues E."/>
            <person name="Meneses C."/>
            <person name="Brioso P."/>
            <person name="Pozzer L."/>
            <person name="Figueiredo D."/>
            <person name="Montano H."/>
            <person name="Junior J."/>
            <person name="de Souza Filho G."/>
            <person name="Martin Quintana Flores V."/>
            <person name="Ferreira B."/>
            <person name="Branco A."/>
            <person name="Gonzalez P."/>
            <person name="Guillobel H."/>
            <person name="Lemos M."/>
            <person name="Seibel L."/>
            <person name="Macedo J."/>
            <person name="Alves-Ferreira M."/>
            <person name="Sachetto-Martins G."/>
            <person name="Coelho A."/>
            <person name="Santos E."/>
            <person name="Amaral G."/>
            <person name="Neves A."/>
            <person name="Pacheco A.B."/>
            <person name="Carvalho D."/>
            <person name="Lery L."/>
            <person name="Bisch P."/>
            <person name="Rossle S.C."/>
            <person name="Urmenyi T."/>
            <person name="Rael Pereira A."/>
            <person name="Silva R."/>
            <person name="Rondinelli E."/>
            <person name="von Kruger W."/>
            <person name="Martins O."/>
            <person name="Baldani J.I."/>
            <person name="Ferreira P.C."/>
        </authorList>
    </citation>
    <scope>NUCLEOTIDE SEQUENCE [LARGE SCALE GENOMIC DNA]</scope>
    <source>
        <strain>ATCC 49037 / DSM 5601 / CCUG 37298 / CIP 103539 / LMG 7603 / PAl5</strain>
    </source>
</reference>
<reference key="2">
    <citation type="journal article" date="2010" name="Stand. Genomic Sci.">
        <title>Two genome sequences of the same bacterial strain, Gluconacetobacter diazotrophicus PAl 5, suggest a new standard in genome sequence submission.</title>
        <authorList>
            <person name="Giongo A."/>
            <person name="Tyler H.L."/>
            <person name="Zipperer U.N."/>
            <person name="Triplett E.W."/>
        </authorList>
    </citation>
    <scope>NUCLEOTIDE SEQUENCE [LARGE SCALE GENOMIC DNA]</scope>
    <source>
        <strain>ATCC 49037 / DSM 5601 / CCUG 37298 / CIP 103539 / LMG 7603 / PAl5</strain>
    </source>
</reference>
<feature type="chain" id="PRO_1000076099" description="Elongation factor Tu">
    <location>
        <begin position="1"/>
        <end position="396"/>
    </location>
</feature>
<feature type="domain" description="tr-type G">
    <location>
        <begin position="10"/>
        <end position="206"/>
    </location>
</feature>
<feature type="region of interest" description="G1" evidence="1">
    <location>
        <begin position="19"/>
        <end position="26"/>
    </location>
</feature>
<feature type="region of interest" description="G2" evidence="1">
    <location>
        <begin position="60"/>
        <end position="64"/>
    </location>
</feature>
<feature type="region of interest" description="G3" evidence="1">
    <location>
        <begin position="81"/>
        <end position="84"/>
    </location>
</feature>
<feature type="region of interest" description="G4" evidence="1">
    <location>
        <begin position="136"/>
        <end position="139"/>
    </location>
</feature>
<feature type="region of interest" description="G5" evidence="1">
    <location>
        <begin position="174"/>
        <end position="176"/>
    </location>
</feature>
<feature type="binding site" evidence="2">
    <location>
        <begin position="19"/>
        <end position="26"/>
    </location>
    <ligand>
        <name>GTP</name>
        <dbReference type="ChEBI" id="CHEBI:37565"/>
    </ligand>
</feature>
<feature type="binding site" evidence="2">
    <location>
        <position position="26"/>
    </location>
    <ligand>
        <name>Mg(2+)</name>
        <dbReference type="ChEBI" id="CHEBI:18420"/>
    </ligand>
</feature>
<feature type="binding site" evidence="2">
    <location>
        <begin position="81"/>
        <end position="85"/>
    </location>
    <ligand>
        <name>GTP</name>
        <dbReference type="ChEBI" id="CHEBI:37565"/>
    </ligand>
</feature>
<feature type="binding site" evidence="2">
    <location>
        <begin position="136"/>
        <end position="139"/>
    </location>
    <ligand>
        <name>GTP</name>
        <dbReference type="ChEBI" id="CHEBI:37565"/>
    </ligand>
</feature>
<organism>
    <name type="scientific">Gluconacetobacter diazotrophicus (strain ATCC 49037 / DSM 5601 / CCUG 37298 / CIP 103539 / LMG 7603 / PAl5)</name>
    <dbReference type="NCBI Taxonomy" id="272568"/>
    <lineage>
        <taxon>Bacteria</taxon>
        <taxon>Pseudomonadati</taxon>
        <taxon>Pseudomonadota</taxon>
        <taxon>Alphaproteobacteria</taxon>
        <taxon>Acetobacterales</taxon>
        <taxon>Acetobacteraceae</taxon>
        <taxon>Gluconacetobacter</taxon>
    </lineage>
</organism>
<gene>
    <name evidence="2" type="primary">tuf</name>
    <name type="ordered locus">GDI3406</name>
    <name type="ordered locus">Gdia_2964</name>
</gene>
<name>EFTU_GLUDA</name>